<feature type="chain" id="PRO_0000274486" description="Heme A synthase COX15">
    <location>
        <begin position="1"/>
        <end position="413"/>
    </location>
</feature>
<feature type="topological domain" description="Mitochondrial matrix" evidence="2">
    <location>
        <begin position="1"/>
        <end position="70"/>
    </location>
</feature>
<feature type="transmembrane region" description="Helical" evidence="3">
    <location>
        <begin position="71"/>
        <end position="91"/>
    </location>
</feature>
<feature type="topological domain" description="Mitochondrial intermembrane" evidence="2">
    <location>
        <begin position="92"/>
        <end position="156"/>
    </location>
</feature>
<feature type="transmembrane region" description="Helical" evidence="3">
    <location>
        <begin position="157"/>
        <end position="174"/>
    </location>
</feature>
<feature type="topological domain" description="Mitochondrial matrix" evidence="2">
    <location>
        <begin position="175"/>
        <end position="186"/>
    </location>
</feature>
<feature type="transmembrane region" description="Helical" evidence="3">
    <location>
        <begin position="187"/>
        <end position="207"/>
    </location>
</feature>
<feature type="topological domain" description="Mitochondrial intermembrane" evidence="2">
    <location>
        <begin position="208"/>
        <end position="229"/>
    </location>
</feature>
<feature type="transmembrane region" description="Helical" evidence="3">
    <location>
        <begin position="230"/>
        <end position="250"/>
    </location>
</feature>
<feature type="topological domain" description="Mitochondrial matrix" evidence="2">
    <location>
        <begin position="251"/>
        <end position="271"/>
    </location>
</feature>
<feature type="transmembrane region" description="Helical" evidence="3">
    <location>
        <begin position="272"/>
        <end position="292"/>
    </location>
</feature>
<feature type="topological domain" description="Mitochondrial intermembrane" evidence="2">
    <location>
        <begin position="293"/>
        <end position="326"/>
    </location>
</feature>
<feature type="transmembrane region" description="Helical" evidence="3">
    <location>
        <begin position="327"/>
        <end position="347"/>
    </location>
</feature>
<feature type="topological domain" description="Mitochondrial matrix" evidence="2">
    <location>
        <begin position="348"/>
        <end position="362"/>
    </location>
</feature>
<feature type="transmembrane region" description="Helical" evidence="3">
    <location>
        <begin position="363"/>
        <end position="383"/>
    </location>
</feature>
<feature type="topological domain" description="Mitochondrial intermembrane" evidence="2">
    <location>
        <position position="384"/>
    </location>
</feature>
<feature type="transmembrane region" description="Helical" evidence="3">
    <location>
        <begin position="385"/>
        <end position="405"/>
    </location>
</feature>
<feature type="topological domain" description="Mitochondrial matrix" evidence="2">
    <location>
        <begin position="406"/>
        <end position="413"/>
    </location>
</feature>
<feature type="binding site" description="axial binding residue" evidence="1">
    <location>
        <position position="155"/>
    </location>
    <ligand>
        <name>heme o</name>
        <dbReference type="ChEBI" id="CHEBI:24480"/>
    </ligand>
    <ligandPart>
        <name>Fe</name>
        <dbReference type="ChEBI" id="CHEBI:18248"/>
    </ligandPart>
</feature>
<feature type="binding site" description="axial binding residue" evidence="1">
    <location>
        <position position="229"/>
    </location>
    <ligand>
        <name>heme o</name>
        <dbReference type="ChEBI" id="CHEBI:24480"/>
    </ligand>
    <ligandPart>
        <name>Fe</name>
        <dbReference type="ChEBI" id="CHEBI:18248"/>
    </ligandPart>
</feature>
<feature type="binding site" description="axial binding residue" evidence="1">
    <location>
        <position position="329"/>
    </location>
    <ligand>
        <name>heme b</name>
        <dbReference type="ChEBI" id="CHEBI:60344"/>
    </ligand>
    <ligandPart>
        <name>Fe</name>
        <dbReference type="ChEBI" id="CHEBI:18248"/>
    </ligandPart>
</feature>
<feature type="binding site" description="axial binding residue" evidence="1">
    <location>
        <position position="390"/>
    </location>
    <ligand>
        <name>heme b</name>
        <dbReference type="ChEBI" id="CHEBI:60344"/>
    </ligand>
    <ligandPart>
        <name>Fe</name>
        <dbReference type="ChEBI" id="CHEBI:18248"/>
    </ligandPart>
</feature>
<protein>
    <recommendedName>
        <fullName>Heme A synthase COX15</fullName>
        <shortName>HAS</shortName>
        <ecNumber evidence="2">1.17.99.9</ecNumber>
    </recommendedName>
    <alternativeName>
        <fullName>Cytochrome c oxidase assembly protein COX15 homolog</fullName>
    </alternativeName>
</protein>
<evidence type="ECO:0000250" key="1">
    <source>
        <dbReference type="UniProtKB" id="P12946"/>
    </source>
</evidence>
<evidence type="ECO:0000250" key="2">
    <source>
        <dbReference type="UniProtKB" id="P40086"/>
    </source>
</evidence>
<evidence type="ECO:0000255" key="3"/>
<evidence type="ECO:0000305" key="4"/>
<gene>
    <name type="primary">COX15</name>
</gene>
<dbReference type="EC" id="1.17.99.9" evidence="2"/>
<dbReference type="EMBL" id="BC123760">
    <property type="protein sequence ID" value="AAI23761.1"/>
    <property type="molecule type" value="mRNA"/>
</dbReference>
<dbReference type="RefSeq" id="NP_001070329.1">
    <property type="nucleotide sequence ID" value="NM_001076861.1"/>
</dbReference>
<dbReference type="SMR" id="Q08DG6"/>
<dbReference type="FunCoup" id="Q08DG6">
    <property type="interactions" value="3704"/>
</dbReference>
<dbReference type="STRING" id="9913.ENSBTAP00000073696"/>
<dbReference type="PaxDb" id="9913-ENSBTAP00000055003"/>
<dbReference type="Ensembl" id="ENSBTAT00000064176.2">
    <property type="protein sequence ID" value="ENSBTAP00000055003.1"/>
    <property type="gene ID" value="ENSBTAG00000045703.3"/>
</dbReference>
<dbReference type="GeneID" id="517811"/>
<dbReference type="KEGG" id="bta:517811"/>
<dbReference type="CTD" id="1355"/>
<dbReference type="VEuPathDB" id="HostDB:ENSBTAG00000045703"/>
<dbReference type="VGNC" id="VGNC:27629">
    <property type="gene designation" value="COX15"/>
</dbReference>
<dbReference type="eggNOG" id="KOG2725">
    <property type="taxonomic scope" value="Eukaryota"/>
</dbReference>
<dbReference type="GeneTree" id="ENSGT00390000002223"/>
<dbReference type="HOGENOM" id="CLU_017627_0_1_1"/>
<dbReference type="InParanoid" id="Q08DG6"/>
<dbReference type="OMA" id="AFVCYSW"/>
<dbReference type="OrthoDB" id="1726137at2759"/>
<dbReference type="TreeFam" id="TF105073"/>
<dbReference type="Reactome" id="R-BTA-189451">
    <property type="pathway name" value="Heme biosynthesis"/>
</dbReference>
<dbReference type="Reactome" id="R-BTA-9864848">
    <property type="pathway name" value="Complex IV assembly"/>
</dbReference>
<dbReference type="UniPathway" id="UPA00269">
    <property type="reaction ID" value="UER00713"/>
</dbReference>
<dbReference type="Proteomes" id="UP000009136">
    <property type="component" value="Chromosome 26"/>
</dbReference>
<dbReference type="Bgee" id="ENSBTAG00000045703">
    <property type="expression patterns" value="Expressed in cardiac ventricle and 105 other cell types or tissues"/>
</dbReference>
<dbReference type="GO" id="GO:0005743">
    <property type="term" value="C:mitochondrial inner membrane"/>
    <property type="evidence" value="ECO:0000318"/>
    <property type="project" value="GO_Central"/>
</dbReference>
<dbReference type="GO" id="GO:0046872">
    <property type="term" value="F:metal ion binding"/>
    <property type="evidence" value="ECO:0007669"/>
    <property type="project" value="UniProtKB-KW"/>
</dbReference>
<dbReference type="GO" id="GO:0016653">
    <property type="term" value="F:oxidoreductase activity, acting on NAD(P)H, heme protein as acceptor"/>
    <property type="evidence" value="ECO:0000318"/>
    <property type="project" value="GO_Central"/>
</dbReference>
<dbReference type="GO" id="GO:0006784">
    <property type="term" value="P:heme A biosynthetic process"/>
    <property type="evidence" value="ECO:0000318"/>
    <property type="project" value="GO_Central"/>
</dbReference>
<dbReference type="HAMAP" id="MF_01665">
    <property type="entry name" value="HemeA_synth_type2"/>
    <property type="match status" value="1"/>
</dbReference>
<dbReference type="InterPro" id="IPR003780">
    <property type="entry name" value="COX15/CtaA_fam"/>
</dbReference>
<dbReference type="InterPro" id="IPR023754">
    <property type="entry name" value="HemeA_Synthase_type2"/>
</dbReference>
<dbReference type="InterPro" id="IPR009003">
    <property type="entry name" value="Peptidase_S1_PA"/>
</dbReference>
<dbReference type="PANTHER" id="PTHR23289">
    <property type="entry name" value="CYTOCHROME C OXIDASE ASSEMBLY PROTEIN COX15"/>
    <property type="match status" value="1"/>
</dbReference>
<dbReference type="PANTHER" id="PTHR23289:SF2">
    <property type="entry name" value="CYTOCHROME C OXIDASE ASSEMBLY PROTEIN COX15 HOMOLOG"/>
    <property type="match status" value="1"/>
</dbReference>
<dbReference type="Pfam" id="PF02628">
    <property type="entry name" value="COX15-CtaA"/>
    <property type="match status" value="1"/>
</dbReference>
<dbReference type="SUPFAM" id="SSF50494">
    <property type="entry name" value="Trypsin-like serine proteases"/>
    <property type="match status" value="1"/>
</dbReference>
<proteinExistence type="evidence at transcript level"/>
<reference key="1">
    <citation type="submission" date="2006-09" db="EMBL/GenBank/DDBJ databases">
        <authorList>
            <consortium name="NIH - Mammalian Gene Collection (MGC) project"/>
        </authorList>
    </citation>
    <scope>NUCLEOTIDE SEQUENCE [LARGE SCALE MRNA]</scope>
    <source>
        <strain>Hereford</strain>
        <tissue>Ascending colon</tissue>
    </source>
</reference>
<sequence>MQRLLFTPLTAFLGSPCLRLLVPRVAPRTQCGCSCGIRRPLRPGQYSTISDVALQPGRSTVSLPSKAAERVVGRWLLVCSGTVAGAVILGGVTRLTESGLSMVDWHLIKEMKPPTSKEEWEAEFQKYQQFPEFKILNHDMTLAEFKFIWYMEYSHRMWGRLVGLAYILPAAYFWKKGWLTRGLKGRVLALCGLVCFQGLLGWYMVKSGLEEKPDSHDIPRVSQYRLAAHLGSALVLYCASLWTSLSLLLPQHKLTETRQLLRLRRFAHGTAGLVFLTALSGAFVAGLDAGLVYNSFPKMGESWIPEDLFTFSPLLRNVFENPTMVQFDHRVLGIASVTAVTVLYFLSRRIPLPRRTKIAATTLLALAYTQVGLGISTLLMYVPTPLAATHQSGSLALLSVALWLMNELRRVPK</sequence>
<name>COX15_BOVIN</name>
<keyword id="KW-0350">Heme biosynthesis</keyword>
<keyword id="KW-0408">Iron</keyword>
<keyword id="KW-0472">Membrane</keyword>
<keyword id="KW-0479">Metal-binding</keyword>
<keyword id="KW-0496">Mitochondrion</keyword>
<keyword id="KW-0999">Mitochondrion inner membrane</keyword>
<keyword id="KW-0560">Oxidoreductase</keyword>
<keyword id="KW-1185">Reference proteome</keyword>
<keyword id="KW-0812">Transmembrane</keyword>
<keyword id="KW-1133">Transmembrane helix</keyword>
<comment type="function">
    <text evidence="2">Catalyzes the second reaction in the biosynthesis of heme A, a prosthetic group of mitochondrial cytochrome c oxidase (CcO). Heme A is synthesized from heme B by two sequential enzymatic reactions catalyzed by heme O synthase (HOS) and heme A synthase (HAS). HAS catalyzes the conversion of heme O to heme A by two successive hydroxylations of the methyl group at C8, in a reaction that involves matrix ferredoxin and ferredoxin reductase. The first hydroxylation forms heme I, the second hydroxylation results in an unstable dihydroxymethyl group, which spontaneously dehydrates, resulting in the formyl group of heme A.</text>
</comment>
<comment type="catalytic activity">
    <reaction evidence="1">
        <text>Fe(II)-heme o + 2 A + H2O = Fe(II)-heme a + 2 AH2</text>
        <dbReference type="Rhea" id="RHEA:63388"/>
        <dbReference type="ChEBI" id="CHEBI:13193"/>
        <dbReference type="ChEBI" id="CHEBI:15377"/>
        <dbReference type="ChEBI" id="CHEBI:17499"/>
        <dbReference type="ChEBI" id="CHEBI:60530"/>
        <dbReference type="ChEBI" id="CHEBI:61715"/>
        <dbReference type="EC" id="1.17.99.9"/>
    </reaction>
    <physiologicalReaction direction="left-to-right" evidence="1">
        <dbReference type="Rhea" id="RHEA:63389"/>
    </physiologicalReaction>
</comment>
<comment type="cofactor">
    <cofactor evidence="1">
        <name>heme b</name>
        <dbReference type="ChEBI" id="CHEBI:60344"/>
    </cofactor>
</comment>
<comment type="pathway">
    <text evidence="2">Porphyrin-containing compound metabolism; heme A biosynthesis; heme A from heme O: step 1/1.</text>
</comment>
<comment type="subcellular location">
    <subcellularLocation>
        <location evidence="2">Mitochondrion inner membrane</location>
        <topology evidence="3">Multi-pass membrane protein</topology>
    </subcellularLocation>
</comment>
<comment type="domain">
    <text evidence="1">The N-half (TM1-TM4) and C-half (TM5-TM8) domains are connected by an intracellular loop. Each domain is formed from four-helix bundles and they align in a pseudo twofold symmetry manner. The N-half domain is the substrate heme O binding domain and the C-half domain is the cofactor heme B binding domain.</text>
</comment>
<comment type="similarity">
    <text evidence="4">Belongs to the COX15/CtaA family. Type 2 subfamily.</text>
</comment>
<accession>Q08DG6</accession>
<organism>
    <name type="scientific">Bos taurus</name>
    <name type="common">Bovine</name>
    <dbReference type="NCBI Taxonomy" id="9913"/>
    <lineage>
        <taxon>Eukaryota</taxon>
        <taxon>Metazoa</taxon>
        <taxon>Chordata</taxon>
        <taxon>Craniata</taxon>
        <taxon>Vertebrata</taxon>
        <taxon>Euteleostomi</taxon>
        <taxon>Mammalia</taxon>
        <taxon>Eutheria</taxon>
        <taxon>Laurasiatheria</taxon>
        <taxon>Artiodactyla</taxon>
        <taxon>Ruminantia</taxon>
        <taxon>Pecora</taxon>
        <taxon>Bovidae</taxon>
        <taxon>Bovinae</taxon>
        <taxon>Bos</taxon>
    </lineage>
</organism>